<evidence type="ECO:0000255" key="1">
    <source>
        <dbReference type="HAMAP-Rule" id="MF_00195"/>
    </source>
</evidence>
<dbReference type="EMBL" id="CP000970">
    <property type="protein sequence ID" value="ACB17163.1"/>
    <property type="molecule type" value="Genomic_DNA"/>
</dbReference>
<dbReference type="RefSeq" id="WP_001309661.1">
    <property type="nucleotide sequence ID" value="NC_010498.1"/>
</dbReference>
<dbReference type="SMR" id="B1LNG6"/>
<dbReference type="KEGG" id="ecm:EcSMS35_2663"/>
<dbReference type="HOGENOM" id="CLU_016077_6_2_6"/>
<dbReference type="Proteomes" id="UP000007011">
    <property type="component" value="Chromosome"/>
</dbReference>
<dbReference type="GO" id="GO:0005525">
    <property type="term" value="F:GTP binding"/>
    <property type="evidence" value="ECO:0007669"/>
    <property type="project" value="UniProtKB-UniRule"/>
</dbReference>
<dbReference type="GO" id="GO:0043022">
    <property type="term" value="F:ribosome binding"/>
    <property type="evidence" value="ECO:0007669"/>
    <property type="project" value="TreeGrafter"/>
</dbReference>
<dbReference type="GO" id="GO:0042254">
    <property type="term" value="P:ribosome biogenesis"/>
    <property type="evidence" value="ECO:0007669"/>
    <property type="project" value="UniProtKB-KW"/>
</dbReference>
<dbReference type="CDD" id="cd01894">
    <property type="entry name" value="EngA1"/>
    <property type="match status" value="1"/>
</dbReference>
<dbReference type="CDD" id="cd01895">
    <property type="entry name" value="EngA2"/>
    <property type="match status" value="1"/>
</dbReference>
<dbReference type="FunFam" id="3.30.300.20:FF:000004">
    <property type="entry name" value="GTPase Der"/>
    <property type="match status" value="1"/>
</dbReference>
<dbReference type="FunFam" id="3.40.50.300:FF:000040">
    <property type="entry name" value="GTPase Der"/>
    <property type="match status" value="1"/>
</dbReference>
<dbReference type="FunFam" id="3.40.50.300:FF:000057">
    <property type="entry name" value="GTPase Der"/>
    <property type="match status" value="1"/>
</dbReference>
<dbReference type="Gene3D" id="3.30.300.20">
    <property type="match status" value="1"/>
</dbReference>
<dbReference type="Gene3D" id="3.40.50.300">
    <property type="entry name" value="P-loop containing nucleotide triphosphate hydrolases"/>
    <property type="match status" value="2"/>
</dbReference>
<dbReference type="HAMAP" id="MF_00195">
    <property type="entry name" value="GTPase_Der"/>
    <property type="match status" value="1"/>
</dbReference>
<dbReference type="InterPro" id="IPR031166">
    <property type="entry name" value="G_ENGA"/>
</dbReference>
<dbReference type="InterPro" id="IPR006073">
    <property type="entry name" value="GTP-bd"/>
</dbReference>
<dbReference type="InterPro" id="IPR016484">
    <property type="entry name" value="GTPase_Der"/>
</dbReference>
<dbReference type="InterPro" id="IPR032859">
    <property type="entry name" value="KH_dom-like"/>
</dbReference>
<dbReference type="InterPro" id="IPR015946">
    <property type="entry name" value="KH_dom-like_a/b"/>
</dbReference>
<dbReference type="InterPro" id="IPR027417">
    <property type="entry name" value="P-loop_NTPase"/>
</dbReference>
<dbReference type="InterPro" id="IPR005225">
    <property type="entry name" value="Small_GTP-bd"/>
</dbReference>
<dbReference type="NCBIfam" id="TIGR03594">
    <property type="entry name" value="GTPase_EngA"/>
    <property type="match status" value="1"/>
</dbReference>
<dbReference type="NCBIfam" id="TIGR00231">
    <property type="entry name" value="small_GTP"/>
    <property type="match status" value="2"/>
</dbReference>
<dbReference type="PANTHER" id="PTHR43834">
    <property type="entry name" value="GTPASE DER"/>
    <property type="match status" value="1"/>
</dbReference>
<dbReference type="PANTHER" id="PTHR43834:SF6">
    <property type="entry name" value="GTPASE DER"/>
    <property type="match status" value="1"/>
</dbReference>
<dbReference type="Pfam" id="PF14714">
    <property type="entry name" value="KH_dom-like"/>
    <property type="match status" value="1"/>
</dbReference>
<dbReference type="Pfam" id="PF01926">
    <property type="entry name" value="MMR_HSR1"/>
    <property type="match status" value="2"/>
</dbReference>
<dbReference type="PIRSF" id="PIRSF006485">
    <property type="entry name" value="GTP-binding_EngA"/>
    <property type="match status" value="1"/>
</dbReference>
<dbReference type="PRINTS" id="PR00326">
    <property type="entry name" value="GTP1OBG"/>
</dbReference>
<dbReference type="SUPFAM" id="SSF52540">
    <property type="entry name" value="P-loop containing nucleoside triphosphate hydrolases"/>
    <property type="match status" value="2"/>
</dbReference>
<dbReference type="PROSITE" id="PS51712">
    <property type="entry name" value="G_ENGA"/>
    <property type="match status" value="2"/>
</dbReference>
<organism>
    <name type="scientific">Escherichia coli (strain SMS-3-5 / SECEC)</name>
    <dbReference type="NCBI Taxonomy" id="439855"/>
    <lineage>
        <taxon>Bacteria</taxon>
        <taxon>Pseudomonadati</taxon>
        <taxon>Pseudomonadota</taxon>
        <taxon>Gammaproteobacteria</taxon>
        <taxon>Enterobacterales</taxon>
        <taxon>Enterobacteriaceae</taxon>
        <taxon>Escherichia</taxon>
    </lineage>
</organism>
<protein>
    <recommendedName>
        <fullName evidence="1">GTPase Der</fullName>
    </recommendedName>
    <alternativeName>
        <fullName evidence="1">GTP-binding protein EngA</fullName>
    </alternativeName>
</protein>
<name>DER_ECOSM</name>
<reference key="1">
    <citation type="journal article" date="2008" name="J. Bacteriol.">
        <title>Insights into the environmental resistance gene pool from the genome sequence of the multidrug-resistant environmental isolate Escherichia coli SMS-3-5.</title>
        <authorList>
            <person name="Fricke W.F."/>
            <person name="Wright M.S."/>
            <person name="Lindell A.H."/>
            <person name="Harkins D.M."/>
            <person name="Baker-Austin C."/>
            <person name="Ravel J."/>
            <person name="Stepanauskas R."/>
        </authorList>
    </citation>
    <scope>NUCLEOTIDE SEQUENCE [LARGE SCALE GENOMIC DNA]</scope>
    <source>
        <strain>SMS-3-5 / SECEC</strain>
    </source>
</reference>
<accession>B1LNG6</accession>
<gene>
    <name evidence="1" type="primary">der</name>
    <name type="synonym">engA</name>
    <name type="ordered locus">EcSMS35_2663</name>
</gene>
<feature type="chain" id="PRO_1000118647" description="GTPase Der">
    <location>
        <begin position="1"/>
        <end position="490"/>
    </location>
</feature>
<feature type="domain" description="EngA-type G 1">
    <location>
        <begin position="3"/>
        <end position="166"/>
    </location>
</feature>
<feature type="domain" description="EngA-type G 2">
    <location>
        <begin position="203"/>
        <end position="376"/>
    </location>
</feature>
<feature type="domain" description="KH-like" evidence="1">
    <location>
        <begin position="377"/>
        <end position="461"/>
    </location>
</feature>
<feature type="binding site" evidence="1">
    <location>
        <begin position="9"/>
        <end position="16"/>
    </location>
    <ligand>
        <name>GTP</name>
        <dbReference type="ChEBI" id="CHEBI:37565"/>
        <label>1</label>
    </ligand>
</feature>
<feature type="binding site" evidence="1">
    <location>
        <begin position="56"/>
        <end position="60"/>
    </location>
    <ligand>
        <name>GTP</name>
        <dbReference type="ChEBI" id="CHEBI:37565"/>
        <label>1</label>
    </ligand>
</feature>
<feature type="binding site" evidence="1">
    <location>
        <begin position="118"/>
        <end position="121"/>
    </location>
    <ligand>
        <name>GTP</name>
        <dbReference type="ChEBI" id="CHEBI:37565"/>
        <label>1</label>
    </ligand>
</feature>
<feature type="binding site" evidence="1">
    <location>
        <begin position="209"/>
        <end position="216"/>
    </location>
    <ligand>
        <name>GTP</name>
        <dbReference type="ChEBI" id="CHEBI:37565"/>
        <label>2</label>
    </ligand>
</feature>
<feature type="binding site" evidence="1">
    <location>
        <begin position="256"/>
        <end position="260"/>
    </location>
    <ligand>
        <name>GTP</name>
        <dbReference type="ChEBI" id="CHEBI:37565"/>
        <label>2</label>
    </ligand>
</feature>
<feature type="binding site" evidence="1">
    <location>
        <begin position="321"/>
        <end position="324"/>
    </location>
    <ligand>
        <name>GTP</name>
        <dbReference type="ChEBI" id="CHEBI:37565"/>
        <label>2</label>
    </ligand>
</feature>
<comment type="function">
    <text evidence="1">GTPase that plays an essential role in the late steps of ribosome biogenesis.</text>
</comment>
<comment type="subunit">
    <text evidence="1">Associates with the 50S ribosomal subunit.</text>
</comment>
<comment type="similarity">
    <text evidence="1">Belongs to the TRAFAC class TrmE-Era-EngA-EngB-Septin-like GTPase superfamily. EngA (Der) GTPase family.</text>
</comment>
<sequence>MVPVVALVGRPNVGKSTLFNRLTRTRDALVADFPGLTRDRKYGRAEIEGREFICIDTGGIDGTEDGVETRMAEQSLLAIEEADVVLFMVDARAGLMPADEAIAKHLRSREKPTFLVANKTDGLDPDQAVVDFYSLGLGEIYPIAASHGRGVLSLLEHVLLPWMEDLAPQEEVDEDAEYWAQFEAEENGEEEEEDDFDPQSLPIKLAIVGRPNVGKSTLTNRILGEERVVVYDMPGTTRDSIYIPMERDGREYVLIDTAGVRKRGKITDAVEKFSVIKTLQAIEDANVVMLVIDAREGISDQDLSLLGFILNSGRSLVIVVNKWDGLSQEVKEQVKETLDFRLGFIDFARVHFISALHGSGVGNLFESVREAYDSSTRRVGTSMLTRIMTMAVEDHQPPLVRGRRVKLKYAHAGGYNPPIVVIHGNQVKDLPDSYKRYLMNYFRKSLDVMGSPIRIQFKEGENPYANKRNTLTPTQMRKRKRLMKHIKKSK</sequence>
<keyword id="KW-0342">GTP-binding</keyword>
<keyword id="KW-0547">Nucleotide-binding</keyword>
<keyword id="KW-0677">Repeat</keyword>
<keyword id="KW-0690">Ribosome biogenesis</keyword>
<proteinExistence type="inferred from homology"/>